<evidence type="ECO:0000255" key="1"/>
<evidence type="ECO:0000255" key="2">
    <source>
        <dbReference type="PROSITE-ProRule" id="PRU00159"/>
    </source>
</evidence>
<evidence type="ECO:0000255" key="3">
    <source>
        <dbReference type="PROSITE-ProRule" id="PRU10027"/>
    </source>
</evidence>
<evidence type="ECO:0000256" key="4">
    <source>
        <dbReference type="SAM" id="MobiDB-lite"/>
    </source>
</evidence>
<evidence type="ECO:0000269" key="5">
    <source>
    </source>
</evidence>
<evidence type="ECO:0000269" key="6">
    <source>
    </source>
</evidence>
<evidence type="ECO:0000269" key="7">
    <source>
    </source>
</evidence>
<evidence type="ECO:0000269" key="8">
    <source>
    </source>
</evidence>
<evidence type="ECO:0000269" key="9">
    <source>
    </source>
</evidence>
<evidence type="ECO:0000269" key="10">
    <source>
    </source>
</evidence>
<evidence type="ECO:0000269" key="11">
    <source>
    </source>
</evidence>
<evidence type="ECO:0000269" key="12">
    <source>
    </source>
</evidence>
<evidence type="ECO:0007829" key="13">
    <source>
        <dbReference type="PDB" id="7NAA"/>
    </source>
</evidence>
<reference key="1">
    <citation type="journal article" date="1998" name="Nature">
        <title>Deciphering the biology of Mycobacterium tuberculosis from the complete genome sequence.</title>
        <authorList>
            <person name="Cole S.T."/>
            <person name="Brosch R."/>
            <person name="Parkhill J."/>
            <person name="Garnier T."/>
            <person name="Churcher C.M."/>
            <person name="Harris D.E."/>
            <person name="Gordon S.V."/>
            <person name="Eiglmeier K."/>
            <person name="Gas S."/>
            <person name="Barry C.E. III"/>
            <person name="Tekaia F."/>
            <person name="Badcock K."/>
            <person name="Basham D."/>
            <person name="Brown D."/>
            <person name="Chillingworth T."/>
            <person name="Connor R."/>
            <person name="Davies R.M."/>
            <person name="Devlin K."/>
            <person name="Feltwell T."/>
            <person name="Gentles S."/>
            <person name="Hamlin N."/>
            <person name="Holroyd S."/>
            <person name="Hornsby T."/>
            <person name="Jagels K."/>
            <person name="Krogh A."/>
            <person name="McLean J."/>
            <person name="Moule S."/>
            <person name="Murphy L.D."/>
            <person name="Oliver S."/>
            <person name="Osborne J."/>
            <person name="Quail M.A."/>
            <person name="Rajandream M.A."/>
            <person name="Rogers J."/>
            <person name="Rutter S."/>
            <person name="Seeger K."/>
            <person name="Skelton S."/>
            <person name="Squares S."/>
            <person name="Squares R."/>
            <person name="Sulston J.E."/>
            <person name="Taylor K."/>
            <person name="Whitehead S."/>
            <person name="Barrell B.G."/>
        </authorList>
    </citation>
    <scope>NUCLEOTIDE SEQUENCE [LARGE SCALE GENOMIC DNA]</scope>
    <source>
        <strain>ATCC 25618 / H37Rv</strain>
    </source>
</reference>
<reference key="2">
    <citation type="journal article" date="2001" name="Microbiology">
        <title>Serine/threonine protein kinases PknF and PknG of Mycobacterium tuberculosis: characterization and localization.</title>
        <authorList>
            <person name="Koul A."/>
            <person name="Choidas A."/>
            <person name="Tyagi A.K."/>
            <person name="Drlica K."/>
            <person name="Singh Y."/>
            <person name="Ullrich A."/>
        </authorList>
    </citation>
    <scope>CATALYTIC ACTIVITY</scope>
    <scope>SUBCELLULAR LOCATION</scope>
    <scope>MUTAGENESIS OF LYS-41</scope>
    <source>
        <strain>ATCC 25618 / H37Rv</strain>
    </source>
</reference>
<reference key="3">
    <citation type="journal article" date="2004" name="FEMS Microbiol. Lett.">
        <title>Two FHA domains on an ABC transporter, Rv1747, mediate its phosphorylation by PknF, a Ser/Thr protein kinase from Mycobacterium tuberculosis.</title>
        <authorList>
            <person name="Molle V."/>
            <person name="Soulat D."/>
            <person name="Jault J.M."/>
            <person name="Grangeasse C."/>
            <person name="Cozzone A.J."/>
            <person name="Prost J.F."/>
        </authorList>
    </citation>
    <scope>FUNCTION</scope>
    <scope>CATALYTIC ACTIVITY</scope>
    <source>
        <strain>ATCC 25618 / H37Rv</strain>
    </source>
</reference>
<reference key="4">
    <citation type="journal article" date="2005" name="Biochem. Biophys. Res. Commun.">
        <title>Conserved autophosphorylation pattern in activation loops and juxtamembrane regions of Mycobacterium tuberculosis Ser/Thr protein kinases.</title>
        <authorList>
            <person name="Duran R."/>
            <person name="Villarino A."/>
            <person name="Bellinzoni M."/>
            <person name="Wehenkel A."/>
            <person name="Fernandez P."/>
            <person name="Boitel B."/>
            <person name="Cole S.T."/>
            <person name="Alzari P.M."/>
            <person name="Cervenansky C."/>
        </authorList>
    </citation>
    <scope>PHOSPHORYLATION AT THR-8; THR-13; THR-173; THR-175; THR-287 AND SER-290</scope>
    <scope>IDENTIFICATION BY MASS SPECTROMETRY</scope>
</reference>
<reference key="5">
    <citation type="journal article" date="2005" name="Infect. Immun.">
        <title>An ABC transporter containing a forkhead-associated domain interacts with a serine-threonine protein kinase and is required for growth of Mycobacterium tuberculosis in mice.</title>
        <authorList>
            <person name="Curry J.M."/>
            <person name="Whalan R."/>
            <person name="Hunt D.M."/>
            <person name="Gohil K."/>
            <person name="Strom M."/>
            <person name="Rickman L."/>
            <person name="Colston M.J."/>
            <person name="Smerdon S.J."/>
            <person name="Buxton R.S."/>
        </authorList>
    </citation>
    <scope>INTERACTION WITH RV1747</scope>
    <scope>MUTAGENESIS OF LYS-41; THR-173; THR-175 AND THR-178</scope>
    <source>
        <strain>ATCC 25618 / H37Rv</strain>
    </source>
</reference>
<reference key="6">
    <citation type="journal article" date="2005" name="J. Bacteriol.">
        <title>Role of Mycobacterium tuberculosis Ser/Thr kinase PknF: implications in glucose transport and cell division.</title>
        <authorList>
            <person name="Deol P."/>
            <person name="Vohra R."/>
            <person name="Saini A.K."/>
            <person name="Singh A."/>
            <person name="Chandra H."/>
            <person name="Chopra P."/>
            <person name="Das T.K."/>
            <person name="Tyagi A.K."/>
            <person name="Singh Y."/>
        </authorList>
    </citation>
    <scope>FUNCTION</scope>
</reference>
<reference key="7">
    <citation type="journal article" date="2005" name="Protein Sci.">
        <title>Mycobacterium tuberculosis serine/threonine kinases PknB, PknD, PknE, and PknF phosphorylate multiple FHA domains.</title>
        <authorList>
            <person name="Grundner C."/>
            <person name="Gay L.M."/>
            <person name="Alber T."/>
        </authorList>
    </citation>
    <scope>FUNCTION</scope>
</reference>
<reference key="8">
    <citation type="journal article" date="2009" name="J. Bacteriol.">
        <title>The Mycobacterium tuberculosis GroEL1 chaperone is a substrate of Ser/Thr protein kinases.</title>
        <authorList>
            <person name="Canova M.J."/>
            <person name="Kremer L."/>
            <person name="Molle V."/>
        </authorList>
    </citation>
    <scope>FUNCTION</scope>
    <scope>CATALYTIC ACTIVITY</scope>
    <scope>MUTAGENESIS OF LYS-41; THR-173 AND THR-175</scope>
</reference>
<reference key="9">
    <citation type="journal article" date="2011" name="J. Biol. Chem.">
        <title>Forkhead-associated (FHA) domain containing ABC transporter Rv1747 is positively regulated by Ser/Thr phosphorylation in Mycobacterium tuberculosis.</title>
        <authorList>
            <person name="Spivey V.L."/>
            <person name="Molle V."/>
            <person name="Whalan R.H."/>
            <person name="Rodgers A."/>
            <person name="Leiba J."/>
            <person name="Stach L."/>
            <person name="Walker K.B."/>
            <person name="Smerdon S.J."/>
            <person name="Buxton R.S."/>
        </authorList>
    </citation>
    <scope>FUNCTION</scope>
    <scope>CATALYTIC ACTIVITY</scope>
    <scope>DISRUPTION PHENOTYPE</scope>
    <source>
        <strain>ATCC 25618 / H37Rv</strain>
    </source>
</reference>
<reference key="10">
    <citation type="journal article" date="2011" name="Mol. Cell. Proteomics">
        <title>Proteogenomic analysis of Mycobacterium tuberculosis by high resolution mass spectrometry.</title>
        <authorList>
            <person name="Kelkar D.S."/>
            <person name="Kumar D."/>
            <person name="Kumar P."/>
            <person name="Balakrishnan L."/>
            <person name="Muthusamy B."/>
            <person name="Yadav A.K."/>
            <person name="Shrivastava P."/>
            <person name="Marimuthu A."/>
            <person name="Anand S."/>
            <person name="Sundaram H."/>
            <person name="Kingsbury R."/>
            <person name="Harsha H.C."/>
            <person name="Nair B."/>
            <person name="Prasad T.S."/>
            <person name="Chauhan D.S."/>
            <person name="Katoch K."/>
            <person name="Katoch V.M."/>
            <person name="Kumar P."/>
            <person name="Chaerkady R."/>
            <person name="Ramachandran S."/>
            <person name="Dash D."/>
            <person name="Pandey A."/>
        </authorList>
    </citation>
    <scope>IDENTIFICATION BY MASS SPECTROMETRY [LARGE SCALE ANALYSIS]</scope>
    <source>
        <strain>ATCC 25618 / H37Rv</strain>
    </source>
</reference>
<protein>
    <recommendedName>
        <fullName>Serine/threonine-protein kinase PknF</fullName>
        <ecNumber>2.7.11.1</ecNumber>
    </recommendedName>
</protein>
<dbReference type="EC" id="2.7.11.1"/>
<dbReference type="EMBL" id="AL123456">
    <property type="protein sequence ID" value="CCP44512.1"/>
    <property type="molecule type" value="Genomic_DNA"/>
</dbReference>
<dbReference type="PIR" id="C70986">
    <property type="entry name" value="C70986"/>
</dbReference>
<dbReference type="RefSeq" id="NP_216262.1">
    <property type="nucleotide sequence ID" value="NC_000962.3"/>
</dbReference>
<dbReference type="RefSeq" id="WP_003899000.1">
    <property type="nucleotide sequence ID" value="NZ_NVQJ01000010.1"/>
</dbReference>
<dbReference type="PDB" id="7NAA">
    <property type="method" value="X-ray"/>
    <property type="resolution" value="2.75 A"/>
    <property type="chains" value="A/B/C/D=1-278"/>
</dbReference>
<dbReference type="PDBsum" id="7NAA"/>
<dbReference type="SMR" id="P9WI75"/>
<dbReference type="FunCoup" id="P9WI75">
    <property type="interactions" value="115"/>
</dbReference>
<dbReference type="IntAct" id="P9WI75">
    <property type="interactions" value="2"/>
</dbReference>
<dbReference type="STRING" id="83332.Rv1746"/>
<dbReference type="ChEMBL" id="CHEMBL2016432"/>
<dbReference type="iPTMnet" id="P9WI75"/>
<dbReference type="PaxDb" id="83332-Rv1746"/>
<dbReference type="DNASU" id="885275"/>
<dbReference type="GeneID" id="45425719"/>
<dbReference type="GeneID" id="885275"/>
<dbReference type="KEGG" id="mtu:Rv1746"/>
<dbReference type="KEGG" id="mtv:RVBD_1746"/>
<dbReference type="TubercuList" id="Rv1746"/>
<dbReference type="eggNOG" id="COG0515">
    <property type="taxonomic scope" value="Bacteria"/>
</dbReference>
<dbReference type="InParanoid" id="P9WI75"/>
<dbReference type="OrthoDB" id="9762169at2"/>
<dbReference type="PhylomeDB" id="P9WI75"/>
<dbReference type="CD-CODE" id="00EEF43C">
    <property type="entry name" value="Synthetic Condensate 000314"/>
</dbReference>
<dbReference type="PRO" id="PR:P9WI75"/>
<dbReference type="Proteomes" id="UP000001584">
    <property type="component" value="Chromosome"/>
</dbReference>
<dbReference type="GO" id="GO:0005829">
    <property type="term" value="C:cytosol"/>
    <property type="evidence" value="ECO:0000314"/>
    <property type="project" value="MTBBASE"/>
</dbReference>
<dbReference type="GO" id="GO:0005886">
    <property type="term" value="C:plasma membrane"/>
    <property type="evidence" value="ECO:0000314"/>
    <property type="project" value="MTBBASE"/>
</dbReference>
<dbReference type="GO" id="GO:0005524">
    <property type="term" value="F:ATP binding"/>
    <property type="evidence" value="ECO:0007669"/>
    <property type="project" value="UniProtKB-KW"/>
</dbReference>
<dbReference type="GO" id="GO:0004672">
    <property type="term" value="F:protein kinase activity"/>
    <property type="evidence" value="ECO:0000314"/>
    <property type="project" value="MTBBASE"/>
</dbReference>
<dbReference type="GO" id="GO:0106310">
    <property type="term" value="F:protein serine kinase activity"/>
    <property type="evidence" value="ECO:0007669"/>
    <property type="project" value="RHEA"/>
</dbReference>
<dbReference type="GO" id="GO:0004674">
    <property type="term" value="F:protein serine/threonine kinase activity"/>
    <property type="evidence" value="ECO:0000314"/>
    <property type="project" value="MTBBASE"/>
</dbReference>
<dbReference type="GO" id="GO:0051055">
    <property type="term" value="P:negative regulation of lipid biosynthetic process"/>
    <property type="evidence" value="ECO:0000314"/>
    <property type="project" value="MTBBASE"/>
</dbReference>
<dbReference type="GO" id="GO:0001558">
    <property type="term" value="P:regulation of cell growth"/>
    <property type="evidence" value="ECO:0000315"/>
    <property type="project" value="MTBBASE"/>
</dbReference>
<dbReference type="GO" id="GO:0010827">
    <property type="term" value="P:regulation of D-glucose transmembrane transport"/>
    <property type="evidence" value="ECO:0000315"/>
    <property type="project" value="MTBBASE"/>
</dbReference>
<dbReference type="GO" id="GO:0000921">
    <property type="term" value="P:septin ring assembly"/>
    <property type="evidence" value="ECO:0000315"/>
    <property type="project" value="MTBBASE"/>
</dbReference>
<dbReference type="CDD" id="cd14014">
    <property type="entry name" value="STKc_PknB_like"/>
    <property type="match status" value="1"/>
</dbReference>
<dbReference type="FunFam" id="1.10.510.10:FF:000998">
    <property type="entry name" value="Anchored-membrane serine/threonine-protein kinase pknF"/>
    <property type="match status" value="1"/>
</dbReference>
<dbReference type="FunFam" id="3.30.200.20:FF:000035">
    <property type="entry name" value="Serine/threonine protein kinase Stk1"/>
    <property type="match status" value="1"/>
</dbReference>
<dbReference type="Gene3D" id="3.30.200.20">
    <property type="entry name" value="Phosphorylase Kinase, domain 1"/>
    <property type="match status" value="1"/>
</dbReference>
<dbReference type="Gene3D" id="1.10.510.10">
    <property type="entry name" value="Transferase(Phosphotransferase) domain 1"/>
    <property type="match status" value="1"/>
</dbReference>
<dbReference type="InterPro" id="IPR011009">
    <property type="entry name" value="Kinase-like_dom_sf"/>
</dbReference>
<dbReference type="InterPro" id="IPR000719">
    <property type="entry name" value="Prot_kinase_dom"/>
</dbReference>
<dbReference type="InterPro" id="IPR008271">
    <property type="entry name" value="Ser/Thr_kinase_AS"/>
</dbReference>
<dbReference type="PANTHER" id="PTHR43289">
    <property type="entry name" value="MITOGEN-ACTIVATED PROTEIN KINASE KINASE KINASE 20-RELATED"/>
    <property type="match status" value="1"/>
</dbReference>
<dbReference type="PANTHER" id="PTHR43289:SF6">
    <property type="entry name" value="SERINE_THREONINE-PROTEIN KINASE NEKL-3"/>
    <property type="match status" value="1"/>
</dbReference>
<dbReference type="Pfam" id="PF00069">
    <property type="entry name" value="Pkinase"/>
    <property type="match status" value="1"/>
</dbReference>
<dbReference type="SMART" id="SM00220">
    <property type="entry name" value="S_TKc"/>
    <property type="match status" value="1"/>
</dbReference>
<dbReference type="SUPFAM" id="SSF56112">
    <property type="entry name" value="Protein kinase-like (PK-like)"/>
    <property type="match status" value="1"/>
</dbReference>
<dbReference type="PROSITE" id="PS50011">
    <property type="entry name" value="PROTEIN_KINASE_DOM"/>
    <property type="match status" value="1"/>
</dbReference>
<dbReference type="PROSITE" id="PS00108">
    <property type="entry name" value="PROTEIN_KINASE_ST"/>
    <property type="match status" value="1"/>
</dbReference>
<sequence length="476" mass="50668">MPLAEGSTFAGFTIVRQLGSGGMGEVYLARHPRLPRQDALKVLRADVSADGEYRARFNREADAAASLWHPHIVAVHDRGEFDGQLWIDMDFVDGTDTVSLLRDRYPNGMPGPEVTEIITAVAEALDYAHERRLLHRDVKPANILIANPDSPDRRIMLADFGIAGWVDDPSGLTATNMTVGTVSYAAPEQLMGNELDGRADQYALAATAFHLLTGSPPFQHANPAVVISQHLSASPPAIGDRVPELTPLDPVFAKALAKQPKDRYQRCVDFARALGHRLGGAGDPDDTRVSQPVAVAAPAKRSLLRTAVIVPAVLAMLLVMAVAVAVREFQRADDERAAQPARTRTTTSAGTTTSVAPASTTRPAPTTPTTTGAADTATASPTAAVVAIGALCFPLGSTGTTKTGATAYCSTLQGTNTTIWSLTEDTVASPTVTATADPTEAPLPIEQESPIRVCMQQTGQTRRECREEIRRSNGWP</sequence>
<keyword id="KW-0002">3D-structure</keyword>
<keyword id="KW-0067">ATP-binding</keyword>
<keyword id="KW-1003">Cell membrane</keyword>
<keyword id="KW-0418">Kinase</keyword>
<keyword id="KW-0472">Membrane</keyword>
<keyword id="KW-0547">Nucleotide-binding</keyword>
<keyword id="KW-0597">Phosphoprotein</keyword>
<keyword id="KW-1185">Reference proteome</keyword>
<keyword id="KW-0723">Serine/threonine-protein kinase</keyword>
<keyword id="KW-0808">Transferase</keyword>
<keyword id="KW-0812">Transmembrane</keyword>
<keyword id="KW-1133">Transmembrane helix</keyword>
<accession>P9WI75</accession>
<accession>L0T7T0</accession>
<accession>O08151</accession>
<accession>P72003</accession>
<gene>
    <name type="primary">pknF</name>
    <name type="ordered locus">Rv1746</name>
    <name type="ORF">MTCY28.09</name>
</gene>
<organism>
    <name type="scientific">Mycobacterium tuberculosis (strain ATCC 25618 / H37Rv)</name>
    <dbReference type="NCBI Taxonomy" id="83332"/>
    <lineage>
        <taxon>Bacteria</taxon>
        <taxon>Bacillati</taxon>
        <taxon>Actinomycetota</taxon>
        <taxon>Actinomycetes</taxon>
        <taxon>Mycobacteriales</taxon>
        <taxon>Mycobacteriaceae</taxon>
        <taxon>Mycobacterium</taxon>
        <taxon>Mycobacterium tuberculosis complex</taxon>
    </lineage>
</organism>
<feature type="chain" id="PRO_0000171213" description="Serine/threonine-protein kinase PknF">
    <location>
        <begin position="1"/>
        <end position="476"/>
    </location>
</feature>
<feature type="transmembrane region" description="Helical" evidence="1">
    <location>
        <begin position="306"/>
        <end position="326"/>
    </location>
</feature>
<feature type="domain" description="Protein kinase" evidence="2">
    <location>
        <begin position="12"/>
        <end position="279"/>
    </location>
</feature>
<feature type="region of interest" description="Disordered" evidence="4">
    <location>
        <begin position="332"/>
        <end position="376"/>
    </location>
</feature>
<feature type="compositionally biased region" description="Low complexity" evidence="4">
    <location>
        <begin position="338"/>
        <end position="376"/>
    </location>
</feature>
<feature type="active site" description="Proton acceptor" evidence="2 3">
    <location>
        <position position="137"/>
    </location>
</feature>
<feature type="binding site" evidence="2">
    <location>
        <begin position="18"/>
        <end position="26"/>
    </location>
    <ligand>
        <name>ATP</name>
        <dbReference type="ChEBI" id="CHEBI:30616"/>
    </ligand>
</feature>
<feature type="binding site" evidence="2">
    <location>
        <position position="41"/>
    </location>
    <ligand>
        <name>ATP</name>
        <dbReference type="ChEBI" id="CHEBI:30616"/>
    </ligand>
</feature>
<feature type="modified residue" description="Phosphothreonine; by autocatalysis" evidence="8">
    <location>
        <position position="8"/>
    </location>
</feature>
<feature type="modified residue" description="Phosphothreonine; by autocatalysis" evidence="8">
    <location>
        <position position="13"/>
    </location>
</feature>
<feature type="modified residue" description="Phosphothreonine; by autocatalysis" evidence="8">
    <location>
        <position position="173"/>
    </location>
</feature>
<feature type="modified residue" description="Phosphothreonine; by autocatalysis" evidence="8">
    <location>
        <position position="175"/>
    </location>
</feature>
<feature type="modified residue" description="Phosphothreonine; by autocatalysis" evidence="8">
    <location>
        <position position="287"/>
    </location>
</feature>
<feature type="modified residue" description="Phosphoserine; by autocatalysis" evidence="8">
    <location>
        <position position="290"/>
    </location>
</feature>
<feature type="mutagenesis site" description="Loss of kinase activity. Abolishes interaction with Rv1747." evidence="5 10 11">
    <original>K</original>
    <variation>M</variation>
    <location>
        <position position="41"/>
    </location>
</feature>
<feature type="mutagenesis site" description="Abolishes interaction with Rv1747. Impairs autokinase activity." evidence="10 11">
    <original>T</original>
    <variation>A</variation>
    <location>
        <position position="173"/>
    </location>
</feature>
<feature type="mutagenesis site" description="Decreases interaction with Rv1747. Decreases autokinase activity." evidence="10 11">
    <original>T</original>
    <variation>A</variation>
    <location>
        <position position="175"/>
    </location>
</feature>
<feature type="mutagenesis site" description="Decreases interaction with Rv1747." evidence="10">
    <original>T</original>
    <variation>A</variation>
    <location>
        <position position="178"/>
    </location>
</feature>
<feature type="strand" evidence="13">
    <location>
        <begin position="12"/>
        <end position="19"/>
    </location>
</feature>
<feature type="strand" evidence="13">
    <location>
        <begin position="25"/>
        <end position="30"/>
    </location>
</feature>
<feature type="strand" evidence="13">
    <location>
        <begin position="32"/>
        <end position="42"/>
    </location>
</feature>
<feature type="helix" evidence="13">
    <location>
        <begin position="56"/>
        <end position="59"/>
    </location>
</feature>
<feature type="turn" evidence="13">
    <location>
        <begin position="62"/>
        <end position="66"/>
    </location>
</feature>
<feature type="strand" evidence="13">
    <location>
        <begin position="75"/>
        <end position="81"/>
    </location>
</feature>
<feature type="strand" evidence="13">
    <location>
        <begin position="84"/>
        <end position="90"/>
    </location>
</feature>
<feature type="strand" evidence="13">
    <location>
        <begin position="94"/>
        <end position="96"/>
    </location>
</feature>
<feature type="helix" evidence="13">
    <location>
        <begin position="97"/>
        <end position="103"/>
    </location>
</feature>
<feature type="helix" evidence="13">
    <location>
        <begin position="111"/>
        <end position="130"/>
    </location>
</feature>
<feature type="helix" evidence="13">
    <location>
        <begin position="140"/>
        <end position="142"/>
    </location>
</feature>
<feature type="strand" evidence="13">
    <location>
        <begin position="143"/>
        <end position="147"/>
    </location>
</feature>
<feature type="strand" evidence="13">
    <location>
        <begin position="154"/>
        <end position="157"/>
    </location>
</feature>
<feature type="helix" evidence="13">
    <location>
        <begin position="187"/>
        <end position="190"/>
    </location>
</feature>
<feature type="helix" evidence="13">
    <location>
        <begin position="197"/>
        <end position="213"/>
    </location>
</feature>
<feature type="helix" evidence="13">
    <location>
        <begin position="223"/>
        <end position="232"/>
    </location>
</feature>
<feature type="helix" evidence="13">
    <location>
        <begin position="238"/>
        <end position="240"/>
    </location>
</feature>
<feature type="helix" evidence="13">
    <location>
        <begin position="243"/>
        <end position="248"/>
    </location>
</feature>
<feature type="helix" evidence="13">
    <location>
        <begin position="249"/>
        <end position="255"/>
    </location>
</feature>
<feature type="helix" evidence="13">
    <location>
        <begin position="260"/>
        <end position="262"/>
    </location>
</feature>
<feature type="helix" evidence="13">
    <location>
        <begin position="267"/>
        <end position="277"/>
    </location>
</feature>
<name>PKNF_MYCTU</name>
<comment type="function">
    <text evidence="6 7 9 11 12">Phosphorylates the FHA domains of the ABC transporter Rv1747, the heat-shock protein GroEL 1, and Rv0020c. May play a role in the regulation of glucose transport, cell growth and septum formation.</text>
</comment>
<comment type="catalytic activity">
    <reaction evidence="5 6 11 12">
        <text>L-seryl-[protein] + ATP = O-phospho-L-seryl-[protein] + ADP + H(+)</text>
        <dbReference type="Rhea" id="RHEA:17989"/>
        <dbReference type="Rhea" id="RHEA-COMP:9863"/>
        <dbReference type="Rhea" id="RHEA-COMP:11604"/>
        <dbReference type="ChEBI" id="CHEBI:15378"/>
        <dbReference type="ChEBI" id="CHEBI:29999"/>
        <dbReference type="ChEBI" id="CHEBI:30616"/>
        <dbReference type="ChEBI" id="CHEBI:83421"/>
        <dbReference type="ChEBI" id="CHEBI:456216"/>
        <dbReference type="EC" id="2.7.11.1"/>
    </reaction>
</comment>
<comment type="catalytic activity">
    <reaction evidence="5 6 11 12">
        <text>L-threonyl-[protein] + ATP = O-phospho-L-threonyl-[protein] + ADP + H(+)</text>
        <dbReference type="Rhea" id="RHEA:46608"/>
        <dbReference type="Rhea" id="RHEA-COMP:11060"/>
        <dbReference type="Rhea" id="RHEA-COMP:11605"/>
        <dbReference type="ChEBI" id="CHEBI:15378"/>
        <dbReference type="ChEBI" id="CHEBI:30013"/>
        <dbReference type="ChEBI" id="CHEBI:30616"/>
        <dbReference type="ChEBI" id="CHEBI:61977"/>
        <dbReference type="ChEBI" id="CHEBI:456216"/>
        <dbReference type="EC" id="2.7.11.1"/>
    </reaction>
</comment>
<comment type="subunit">
    <text evidence="10">Interacts with Rv1747.</text>
</comment>
<comment type="interaction">
    <interactant intactId="EBI-2945875">
        <id>P9WI75</id>
    </interactant>
    <interactant intactId="EBI-2945826">
        <id>P9WPE7</id>
        <label>groEL2</label>
    </interactant>
    <organismsDiffer>false</organismsDiffer>
    <experiments>3</experiments>
</comment>
<comment type="interaction">
    <interactant intactId="EBI-2945875">
        <id>P9WI75</id>
    </interactant>
    <interactant intactId="EBI-2945921">
        <id>P9WMK1</id>
        <label>hspX</label>
    </interactant>
    <organismsDiffer>false</organismsDiffer>
    <experiments>2</experiments>
</comment>
<comment type="subcellular location">
    <subcellularLocation>
        <location evidence="5">Cell membrane</location>
        <topology evidence="5">Single-pass membrane protein</topology>
    </subcellularLocation>
</comment>
<comment type="PTM">
    <text evidence="8">Autophosphorylated. Dephosphorylated by PstP.</text>
</comment>
<comment type="disruption phenotype">
    <text evidence="12">Disruption does not attenuate growth in macrophages.</text>
</comment>
<comment type="similarity">
    <text evidence="2">Belongs to the protein kinase superfamily. Ser/Thr protein kinase family.</text>
</comment>
<proteinExistence type="evidence at protein level"/>